<feature type="chain" id="PRO_0000335375" description="Ribosomal RNA small subunit methyltransferase G">
    <location>
        <begin position="1"/>
        <end position="227"/>
    </location>
</feature>
<feature type="binding site" evidence="1">
    <location>
        <position position="74"/>
    </location>
    <ligand>
        <name>S-adenosyl-L-methionine</name>
        <dbReference type="ChEBI" id="CHEBI:59789"/>
    </ligand>
</feature>
<feature type="binding site" evidence="1">
    <location>
        <position position="79"/>
    </location>
    <ligand>
        <name>S-adenosyl-L-methionine</name>
        <dbReference type="ChEBI" id="CHEBI:59789"/>
    </ligand>
</feature>
<feature type="binding site" evidence="1">
    <location>
        <begin position="124"/>
        <end position="125"/>
    </location>
    <ligand>
        <name>S-adenosyl-L-methionine</name>
        <dbReference type="ChEBI" id="CHEBI:59789"/>
    </ligand>
</feature>
<feature type="binding site" evidence="1">
    <location>
        <position position="142"/>
    </location>
    <ligand>
        <name>S-adenosyl-L-methionine</name>
        <dbReference type="ChEBI" id="CHEBI:59789"/>
    </ligand>
</feature>
<sequence>MKHAEIPPPPDAAAEVFGPALGAARRYAEILAGAGVERGLLGPREVDRIWDRHILNCAVIGELVEAGERVADVGSGAGLPGIPLALARPDVHVVLIEPLLRRSDFLREAIEDVGIECSVVRGRAEDRSVREEVGPTDVVVSRAVASLDKLAKWSSPLLRPGGRMLAIKGERAAEEIEEHRRALAALGVSELKVERCGARFVDPPATVVVGFQATAPEKRPRSGRRQR</sequence>
<gene>
    <name evidence="1" type="primary">rsmG</name>
    <name type="ordered locus">Mflv_0833</name>
</gene>
<proteinExistence type="inferred from homology"/>
<reference key="1">
    <citation type="submission" date="2007-04" db="EMBL/GenBank/DDBJ databases">
        <title>Complete sequence of chromosome of Mycobacterium gilvum PYR-GCK.</title>
        <authorList>
            <consortium name="US DOE Joint Genome Institute"/>
            <person name="Copeland A."/>
            <person name="Lucas S."/>
            <person name="Lapidus A."/>
            <person name="Barry K."/>
            <person name="Detter J.C."/>
            <person name="Glavina del Rio T."/>
            <person name="Hammon N."/>
            <person name="Israni S."/>
            <person name="Dalin E."/>
            <person name="Tice H."/>
            <person name="Pitluck S."/>
            <person name="Chain P."/>
            <person name="Malfatti S."/>
            <person name="Shin M."/>
            <person name="Vergez L."/>
            <person name="Schmutz J."/>
            <person name="Larimer F."/>
            <person name="Land M."/>
            <person name="Hauser L."/>
            <person name="Kyrpides N."/>
            <person name="Mikhailova N."/>
            <person name="Miller C."/>
            <person name="Richardson P."/>
        </authorList>
    </citation>
    <scope>NUCLEOTIDE SEQUENCE [LARGE SCALE GENOMIC DNA]</scope>
    <source>
        <strain>PYR-GCK</strain>
    </source>
</reference>
<organism>
    <name type="scientific">Mycolicibacterium gilvum (strain PYR-GCK)</name>
    <name type="common">Mycobacterium gilvum (strain PYR-GCK)</name>
    <dbReference type="NCBI Taxonomy" id="350054"/>
    <lineage>
        <taxon>Bacteria</taxon>
        <taxon>Bacillati</taxon>
        <taxon>Actinomycetota</taxon>
        <taxon>Actinomycetes</taxon>
        <taxon>Mycobacteriales</taxon>
        <taxon>Mycobacteriaceae</taxon>
        <taxon>Mycolicibacterium</taxon>
    </lineage>
</organism>
<accession>A4T4S9</accession>
<name>RSMG_MYCGI</name>
<comment type="function">
    <text evidence="1">Specifically methylates the N7 position of guanine in position 518 of 16S rRNA.</text>
</comment>
<comment type="subcellular location">
    <subcellularLocation>
        <location evidence="1">Cytoplasm</location>
    </subcellularLocation>
</comment>
<comment type="similarity">
    <text evidence="1">Belongs to the methyltransferase superfamily. RNA methyltransferase RsmG family.</text>
</comment>
<evidence type="ECO:0000255" key="1">
    <source>
        <dbReference type="HAMAP-Rule" id="MF_00074"/>
    </source>
</evidence>
<keyword id="KW-0963">Cytoplasm</keyword>
<keyword id="KW-0489">Methyltransferase</keyword>
<keyword id="KW-0698">rRNA processing</keyword>
<keyword id="KW-0949">S-adenosyl-L-methionine</keyword>
<keyword id="KW-0808">Transferase</keyword>
<dbReference type="EC" id="2.1.1.-" evidence="1"/>
<dbReference type="EMBL" id="CP000656">
    <property type="protein sequence ID" value="ABP43317.1"/>
    <property type="molecule type" value="Genomic_DNA"/>
</dbReference>
<dbReference type="SMR" id="A4T4S9"/>
<dbReference type="STRING" id="350054.Mflv_0833"/>
<dbReference type="KEGG" id="mgi:Mflv_0833"/>
<dbReference type="eggNOG" id="COG0357">
    <property type="taxonomic scope" value="Bacteria"/>
</dbReference>
<dbReference type="HOGENOM" id="CLU_065341_5_0_11"/>
<dbReference type="OrthoDB" id="9808773at2"/>
<dbReference type="GO" id="GO:0005829">
    <property type="term" value="C:cytosol"/>
    <property type="evidence" value="ECO:0007669"/>
    <property type="project" value="TreeGrafter"/>
</dbReference>
<dbReference type="GO" id="GO:0070043">
    <property type="term" value="F:rRNA (guanine-N7-)-methyltransferase activity"/>
    <property type="evidence" value="ECO:0007669"/>
    <property type="project" value="UniProtKB-UniRule"/>
</dbReference>
<dbReference type="CDD" id="cd02440">
    <property type="entry name" value="AdoMet_MTases"/>
    <property type="match status" value="1"/>
</dbReference>
<dbReference type="Gene3D" id="3.40.50.150">
    <property type="entry name" value="Vaccinia Virus protein VP39"/>
    <property type="match status" value="1"/>
</dbReference>
<dbReference type="HAMAP" id="MF_00074">
    <property type="entry name" value="16SrRNA_methyltr_G"/>
    <property type="match status" value="1"/>
</dbReference>
<dbReference type="InterPro" id="IPR003682">
    <property type="entry name" value="rRNA_ssu_MeTfrase_G"/>
</dbReference>
<dbReference type="InterPro" id="IPR029063">
    <property type="entry name" value="SAM-dependent_MTases_sf"/>
</dbReference>
<dbReference type="NCBIfam" id="TIGR00138">
    <property type="entry name" value="rsmG_gidB"/>
    <property type="match status" value="1"/>
</dbReference>
<dbReference type="PANTHER" id="PTHR31760">
    <property type="entry name" value="S-ADENOSYL-L-METHIONINE-DEPENDENT METHYLTRANSFERASES SUPERFAMILY PROTEIN"/>
    <property type="match status" value="1"/>
</dbReference>
<dbReference type="PANTHER" id="PTHR31760:SF0">
    <property type="entry name" value="S-ADENOSYL-L-METHIONINE-DEPENDENT METHYLTRANSFERASES SUPERFAMILY PROTEIN"/>
    <property type="match status" value="1"/>
</dbReference>
<dbReference type="Pfam" id="PF02527">
    <property type="entry name" value="GidB"/>
    <property type="match status" value="1"/>
</dbReference>
<dbReference type="PIRSF" id="PIRSF003078">
    <property type="entry name" value="GidB"/>
    <property type="match status" value="1"/>
</dbReference>
<dbReference type="SUPFAM" id="SSF53335">
    <property type="entry name" value="S-adenosyl-L-methionine-dependent methyltransferases"/>
    <property type="match status" value="1"/>
</dbReference>
<protein>
    <recommendedName>
        <fullName evidence="1">Ribosomal RNA small subunit methyltransferase G</fullName>
        <ecNumber evidence="1">2.1.1.-</ecNumber>
    </recommendedName>
    <alternativeName>
        <fullName evidence="1">16S rRNA 7-methylguanosine methyltransferase</fullName>
        <shortName evidence="1">16S rRNA m7G methyltransferase</shortName>
    </alternativeName>
</protein>